<feature type="chain" id="PRO_1000126889" description="Large ribosomal subunit protein bL9">
    <location>
        <begin position="1"/>
        <end position="167"/>
    </location>
</feature>
<reference key="1">
    <citation type="journal article" date="2008" name="Genome Res.">
        <title>Chlamydia trachomatis: genome sequence analysis of lymphogranuloma venereum isolates.</title>
        <authorList>
            <person name="Thomson N.R."/>
            <person name="Holden M.T.G."/>
            <person name="Carder C."/>
            <person name="Lennard N."/>
            <person name="Lockey S.J."/>
            <person name="Marsh P."/>
            <person name="Skipp P."/>
            <person name="O'Connor C.D."/>
            <person name="Goodhead I."/>
            <person name="Norbertzcak H."/>
            <person name="Harris B."/>
            <person name="Ormond D."/>
            <person name="Rance R."/>
            <person name="Quail M.A."/>
            <person name="Parkhill J."/>
            <person name="Stephens R.S."/>
            <person name="Clarke I.N."/>
        </authorList>
    </citation>
    <scope>NUCLEOTIDE SEQUENCE [LARGE SCALE GENOMIC DNA]</scope>
    <source>
        <strain>UCH-1/proctitis</strain>
    </source>
</reference>
<sequence>MKPQLLLLEDVDGLGRSGDLVVAKPGYVRNYLLPKGKAVVASAGTLRLQAKLQEQRLLQAAADKEESLRLAEMLRSIVLDFQVRVDSENNMYGSVTVNDMISAAEQQGVVLTRKNFPRSHSGIKNLGRHVVGLKLKEGVTADLHLEVRADHEIIEQKELQSAEEQEG</sequence>
<keyword id="KW-0687">Ribonucleoprotein</keyword>
<keyword id="KW-0689">Ribosomal protein</keyword>
<keyword id="KW-0694">RNA-binding</keyword>
<keyword id="KW-0699">rRNA-binding</keyword>
<dbReference type="EMBL" id="AM884177">
    <property type="protein sequence ID" value="CAP06571.1"/>
    <property type="molecule type" value="Genomic_DNA"/>
</dbReference>
<dbReference type="RefSeq" id="WP_009872185.1">
    <property type="nucleotide sequence ID" value="NC_010280.2"/>
</dbReference>
<dbReference type="SMR" id="B0BAQ9"/>
<dbReference type="KEGG" id="ctl:CTLon_0173"/>
<dbReference type="HOGENOM" id="CLU_078938_5_1_0"/>
<dbReference type="Proteomes" id="UP001154401">
    <property type="component" value="Chromosome"/>
</dbReference>
<dbReference type="GO" id="GO:1990904">
    <property type="term" value="C:ribonucleoprotein complex"/>
    <property type="evidence" value="ECO:0007669"/>
    <property type="project" value="UniProtKB-KW"/>
</dbReference>
<dbReference type="GO" id="GO:0005840">
    <property type="term" value="C:ribosome"/>
    <property type="evidence" value="ECO:0007669"/>
    <property type="project" value="UniProtKB-KW"/>
</dbReference>
<dbReference type="GO" id="GO:0019843">
    <property type="term" value="F:rRNA binding"/>
    <property type="evidence" value="ECO:0007669"/>
    <property type="project" value="UniProtKB-UniRule"/>
</dbReference>
<dbReference type="GO" id="GO:0003735">
    <property type="term" value="F:structural constituent of ribosome"/>
    <property type="evidence" value="ECO:0007669"/>
    <property type="project" value="InterPro"/>
</dbReference>
<dbReference type="GO" id="GO:0006412">
    <property type="term" value="P:translation"/>
    <property type="evidence" value="ECO:0007669"/>
    <property type="project" value="UniProtKB-UniRule"/>
</dbReference>
<dbReference type="Gene3D" id="3.10.430.100">
    <property type="entry name" value="Ribosomal protein L9, C-terminal domain"/>
    <property type="match status" value="1"/>
</dbReference>
<dbReference type="Gene3D" id="3.40.5.10">
    <property type="entry name" value="Ribosomal protein L9, N-terminal domain"/>
    <property type="match status" value="1"/>
</dbReference>
<dbReference type="HAMAP" id="MF_00503">
    <property type="entry name" value="Ribosomal_bL9"/>
    <property type="match status" value="1"/>
</dbReference>
<dbReference type="InterPro" id="IPR000244">
    <property type="entry name" value="Ribosomal_bL9"/>
</dbReference>
<dbReference type="InterPro" id="IPR009027">
    <property type="entry name" value="Ribosomal_bL9/RNase_H1_N"/>
</dbReference>
<dbReference type="InterPro" id="IPR020594">
    <property type="entry name" value="Ribosomal_bL9_bac/chp"/>
</dbReference>
<dbReference type="InterPro" id="IPR020069">
    <property type="entry name" value="Ribosomal_bL9_C"/>
</dbReference>
<dbReference type="InterPro" id="IPR036791">
    <property type="entry name" value="Ribosomal_bL9_C_sf"/>
</dbReference>
<dbReference type="InterPro" id="IPR020070">
    <property type="entry name" value="Ribosomal_bL9_N"/>
</dbReference>
<dbReference type="InterPro" id="IPR036935">
    <property type="entry name" value="Ribosomal_bL9_N_sf"/>
</dbReference>
<dbReference type="NCBIfam" id="TIGR00158">
    <property type="entry name" value="L9"/>
    <property type="match status" value="1"/>
</dbReference>
<dbReference type="PANTHER" id="PTHR21368">
    <property type="entry name" value="50S RIBOSOMAL PROTEIN L9"/>
    <property type="match status" value="1"/>
</dbReference>
<dbReference type="Pfam" id="PF03948">
    <property type="entry name" value="Ribosomal_L9_C"/>
    <property type="match status" value="1"/>
</dbReference>
<dbReference type="Pfam" id="PF01281">
    <property type="entry name" value="Ribosomal_L9_N"/>
    <property type="match status" value="1"/>
</dbReference>
<dbReference type="SUPFAM" id="SSF55658">
    <property type="entry name" value="L9 N-domain-like"/>
    <property type="match status" value="1"/>
</dbReference>
<dbReference type="SUPFAM" id="SSF55653">
    <property type="entry name" value="Ribosomal protein L9 C-domain"/>
    <property type="match status" value="1"/>
</dbReference>
<dbReference type="PROSITE" id="PS00651">
    <property type="entry name" value="RIBOSOMAL_L9"/>
    <property type="match status" value="1"/>
</dbReference>
<proteinExistence type="inferred from homology"/>
<gene>
    <name evidence="1" type="primary">rplI</name>
    <name type="ordered locus">CTLon_0173</name>
</gene>
<organism>
    <name type="scientific">Chlamydia trachomatis serovar L2b (strain UCH-1/proctitis)</name>
    <dbReference type="NCBI Taxonomy" id="471473"/>
    <lineage>
        <taxon>Bacteria</taxon>
        <taxon>Pseudomonadati</taxon>
        <taxon>Chlamydiota</taxon>
        <taxon>Chlamydiia</taxon>
        <taxon>Chlamydiales</taxon>
        <taxon>Chlamydiaceae</taxon>
        <taxon>Chlamydia/Chlamydophila group</taxon>
        <taxon>Chlamydia</taxon>
    </lineage>
</organism>
<comment type="function">
    <text evidence="1">Binds to the 23S rRNA.</text>
</comment>
<comment type="similarity">
    <text evidence="1">Belongs to the bacterial ribosomal protein bL9 family.</text>
</comment>
<name>RL9_CHLTB</name>
<accession>B0BAQ9</accession>
<evidence type="ECO:0000255" key="1">
    <source>
        <dbReference type="HAMAP-Rule" id="MF_00503"/>
    </source>
</evidence>
<evidence type="ECO:0000305" key="2"/>
<protein>
    <recommendedName>
        <fullName evidence="1">Large ribosomal subunit protein bL9</fullName>
    </recommendedName>
    <alternativeName>
        <fullName evidence="2">50S ribosomal protein L9</fullName>
    </alternativeName>
</protein>